<proteinExistence type="inferred from homology"/>
<keyword id="KW-0997">Cell inner membrane</keyword>
<keyword id="KW-1003">Cell membrane</keyword>
<keyword id="KW-0143">Chaperone</keyword>
<keyword id="KW-0472">Membrane</keyword>
<keyword id="KW-0653">Protein transport</keyword>
<keyword id="KW-1185">Reference proteome</keyword>
<keyword id="KW-0812">Transmembrane</keyword>
<keyword id="KW-1133">Transmembrane helix</keyword>
<keyword id="KW-0813">Transport</keyword>
<gene>
    <name evidence="1" type="primary">yidC</name>
    <name type="ordered locus">BMA3397</name>
</gene>
<organism>
    <name type="scientific">Burkholderia mallei (strain ATCC 23344)</name>
    <dbReference type="NCBI Taxonomy" id="243160"/>
    <lineage>
        <taxon>Bacteria</taxon>
        <taxon>Pseudomonadati</taxon>
        <taxon>Pseudomonadota</taxon>
        <taxon>Betaproteobacteria</taxon>
        <taxon>Burkholderiales</taxon>
        <taxon>Burkholderiaceae</taxon>
        <taxon>Burkholderia</taxon>
        <taxon>pseudomallei group</taxon>
    </lineage>
</organism>
<protein>
    <recommendedName>
        <fullName evidence="1">Membrane protein insertase YidC</fullName>
    </recommendedName>
    <alternativeName>
        <fullName evidence="1">Foldase YidC</fullName>
    </alternativeName>
    <alternativeName>
        <fullName evidence="1">Membrane integrase YidC</fullName>
    </alternativeName>
    <alternativeName>
        <fullName evidence="1">Membrane protein YidC</fullName>
    </alternativeName>
</protein>
<name>YIDC_BURMA</name>
<comment type="function">
    <text evidence="1">Required for the insertion and/or proper folding and/or complex formation of integral membrane proteins into the membrane. Involved in integration of membrane proteins that insert both dependently and independently of the Sec translocase complex, as well as at least some lipoproteins. Aids folding of multispanning membrane proteins.</text>
</comment>
<comment type="subunit">
    <text evidence="1">Interacts with the Sec translocase complex via SecD. Specifically interacts with transmembrane segments of nascent integral membrane proteins during membrane integration.</text>
</comment>
<comment type="subcellular location">
    <subcellularLocation>
        <location evidence="1">Cell inner membrane</location>
        <topology evidence="1">Multi-pass membrane protein</topology>
    </subcellularLocation>
</comment>
<comment type="similarity">
    <text evidence="1">Belongs to the OXA1/ALB3/YidC family. Type 1 subfamily.</text>
</comment>
<feature type="chain" id="PRO_1000070069" description="Membrane protein insertase YidC">
    <location>
        <begin position="1"/>
        <end position="558"/>
    </location>
</feature>
<feature type="transmembrane region" description="Helical" evidence="1">
    <location>
        <begin position="3"/>
        <end position="23"/>
    </location>
</feature>
<feature type="transmembrane region" description="Helical" evidence="1">
    <location>
        <begin position="364"/>
        <end position="384"/>
    </location>
</feature>
<feature type="transmembrane region" description="Helical" evidence="1">
    <location>
        <begin position="438"/>
        <end position="458"/>
    </location>
</feature>
<feature type="transmembrane region" description="Helical" evidence="1">
    <location>
        <begin position="477"/>
        <end position="497"/>
    </location>
</feature>
<feature type="transmembrane region" description="Helical" evidence="1">
    <location>
        <begin position="508"/>
        <end position="528"/>
    </location>
</feature>
<evidence type="ECO:0000255" key="1">
    <source>
        <dbReference type="HAMAP-Rule" id="MF_01810"/>
    </source>
</evidence>
<dbReference type="EMBL" id="CP000010">
    <property type="protein sequence ID" value="AAU48914.1"/>
    <property type="molecule type" value="Genomic_DNA"/>
</dbReference>
<dbReference type="RefSeq" id="WP_004198813.1">
    <property type="nucleotide sequence ID" value="NC_006348.1"/>
</dbReference>
<dbReference type="RefSeq" id="YP_104854.1">
    <property type="nucleotide sequence ID" value="NC_006348.1"/>
</dbReference>
<dbReference type="SMR" id="Q62EM4"/>
<dbReference type="GeneID" id="92981062"/>
<dbReference type="KEGG" id="bma:BMA3397"/>
<dbReference type="PATRIC" id="fig|243160.12.peg.3487"/>
<dbReference type="eggNOG" id="COG0706">
    <property type="taxonomic scope" value="Bacteria"/>
</dbReference>
<dbReference type="HOGENOM" id="CLU_016535_3_0_4"/>
<dbReference type="Proteomes" id="UP000006693">
    <property type="component" value="Chromosome 1"/>
</dbReference>
<dbReference type="GO" id="GO:0005886">
    <property type="term" value="C:plasma membrane"/>
    <property type="evidence" value="ECO:0007669"/>
    <property type="project" value="UniProtKB-SubCell"/>
</dbReference>
<dbReference type="GO" id="GO:0032977">
    <property type="term" value="F:membrane insertase activity"/>
    <property type="evidence" value="ECO:0007669"/>
    <property type="project" value="InterPro"/>
</dbReference>
<dbReference type="GO" id="GO:0051205">
    <property type="term" value="P:protein insertion into membrane"/>
    <property type="evidence" value="ECO:0007669"/>
    <property type="project" value="TreeGrafter"/>
</dbReference>
<dbReference type="GO" id="GO:0015031">
    <property type="term" value="P:protein transport"/>
    <property type="evidence" value="ECO:0007669"/>
    <property type="project" value="UniProtKB-KW"/>
</dbReference>
<dbReference type="CDD" id="cd20070">
    <property type="entry name" value="5TM_YidC_Alb3"/>
    <property type="match status" value="1"/>
</dbReference>
<dbReference type="CDD" id="cd19961">
    <property type="entry name" value="EcYidC-like_peri"/>
    <property type="match status" value="1"/>
</dbReference>
<dbReference type="Gene3D" id="2.70.98.90">
    <property type="match status" value="1"/>
</dbReference>
<dbReference type="HAMAP" id="MF_01810">
    <property type="entry name" value="YidC_type1"/>
    <property type="match status" value="1"/>
</dbReference>
<dbReference type="InterPro" id="IPR019998">
    <property type="entry name" value="Membr_insert_YidC"/>
</dbReference>
<dbReference type="InterPro" id="IPR028053">
    <property type="entry name" value="Membr_insert_YidC_N"/>
</dbReference>
<dbReference type="InterPro" id="IPR001708">
    <property type="entry name" value="YidC/ALB3/OXA1/COX18"/>
</dbReference>
<dbReference type="InterPro" id="IPR028055">
    <property type="entry name" value="YidC/Oxa/ALB_C"/>
</dbReference>
<dbReference type="InterPro" id="IPR047196">
    <property type="entry name" value="YidC_ALB_C"/>
</dbReference>
<dbReference type="InterPro" id="IPR038221">
    <property type="entry name" value="YidC_periplasmic_sf"/>
</dbReference>
<dbReference type="NCBIfam" id="NF002352">
    <property type="entry name" value="PRK01318.1-3"/>
    <property type="match status" value="1"/>
</dbReference>
<dbReference type="NCBIfam" id="NF002353">
    <property type="entry name" value="PRK01318.1-4"/>
    <property type="match status" value="1"/>
</dbReference>
<dbReference type="NCBIfam" id="TIGR03593">
    <property type="entry name" value="yidC_nterm"/>
    <property type="match status" value="1"/>
</dbReference>
<dbReference type="NCBIfam" id="TIGR03592">
    <property type="entry name" value="yidC_oxa1_cterm"/>
    <property type="match status" value="1"/>
</dbReference>
<dbReference type="PANTHER" id="PTHR12428:SF65">
    <property type="entry name" value="CYTOCHROME C OXIDASE ASSEMBLY PROTEIN COX18, MITOCHONDRIAL"/>
    <property type="match status" value="1"/>
</dbReference>
<dbReference type="PANTHER" id="PTHR12428">
    <property type="entry name" value="OXA1"/>
    <property type="match status" value="1"/>
</dbReference>
<dbReference type="Pfam" id="PF02096">
    <property type="entry name" value="60KD_IMP"/>
    <property type="match status" value="1"/>
</dbReference>
<dbReference type="Pfam" id="PF14849">
    <property type="entry name" value="YidC_periplas"/>
    <property type="match status" value="1"/>
</dbReference>
<dbReference type="PRINTS" id="PR00701">
    <property type="entry name" value="60KDINNERMP"/>
</dbReference>
<dbReference type="PRINTS" id="PR01900">
    <property type="entry name" value="YIDCPROTEIN"/>
</dbReference>
<sequence length="558" mass="61191">MDIKRTVLWVIFFMSAVMLFDNWQRSHGRPSMFFPNVTQTNTASNATNGNGASGASAAAAANALPAAATGAAPATTAPAAQAQLVRFSTDVYNGEIDTRGGTLAKLTLTKAGDGKQPDLSVTLFDHTANHTYLARTGLLGGDFPNHNDVYAQVAGPTSLAADQNTLKLSFESPVKGGVKVVKTYTFTRGSYVIGVDTKIENVGAAPVTPSVYMELVRDNSSVETPMFSHTFLGPAVYTDQKHFQKITFGDIDKNKADYVTSADNGWIAMVQHYFASAWIPQSGAKRDIYVEKIDPTLYRVGVKQPVEAIAPGQSADVSARLFAGPEEERMLEGIAPGLELVKDYGWVTIIAKPLFWLLEKIHGFVGNWGWAIVLLTLLIKAVFFPLSAASYKSMARMKEITPRMQALRERFKSDPQKMNAALMELYKTEKVNPFGGCLPVVIQIPVFISLYWVLLASVEMRGAPWVLWIHDLSQRDPYFILPVLMAVSMFVQTKLNPTPPDPVQAKMMMFMPIAFSVMFFFFPAGLVLYYVVNNVLSIAQQYYITRTLGGAAAKKKAS</sequence>
<reference key="1">
    <citation type="journal article" date="2004" name="Proc. Natl. Acad. Sci. U.S.A.">
        <title>Structural flexibility in the Burkholderia mallei genome.</title>
        <authorList>
            <person name="Nierman W.C."/>
            <person name="DeShazer D."/>
            <person name="Kim H.S."/>
            <person name="Tettelin H."/>
            <person name="Nelson K.E."/>
            <person name="Feldblyum T.V."/>
            <person name="Ulrich R.L."/>
            <person name="Ronning C.M."/>
            <person name="Brinkac L.M."/>
            <person name="Daugherty S.C."/>
            <person name="Davidsen T.D."/>
            <person name="DeBoy R.T."/>
            <person name="Dimitrov G."/>
            <person name="Dodson R.J."/>
            <person name="Durkin A.S."/>
            <person name="Gwinn M.L."/>
            <person name="Haft D.H."/>
            <person name="Khouri H.M."/>
            <person name="Kolonay J.F."/>
            <person name="Madupu R."/>
            <person name="Mohammoud Y."/>
            <person name="Nelson W.C."/>
            <person name="Radune D."/>
            <person name="Romero C.M."/>
            <person name="Sarria S."/>
            <person name="Selengut J."/>
            <person name="Shamblin C."/>
            <person name="Sullivan S.A."/>
            <person name="White O."/>
            <person name="Yu Y."/>
            <person name="Zafar N."/>
            <person name="Zhou L."/>
            <person name="Fraser C.M."/>
        </authorList>
    </citation>
    <scope>NUCLEOTIDE SEQUENCE [LARGE SCALE GENOMIC DNA]</scope>
    <source>
        <strain>ATCC 23344</strain>
    </source>
</reference>
<accession>Q62EM4</accession>